<keyword id="KW-0903">Direct protein sequencing</keyword>
<keyword id="KW-1015">Disulfide bond</keyword>
<keyword id="KW-0372">Hormone</keyword>
<keyword id="KW-0964">Secreted</keyword>
<accession>P11952</accession>
<proteinExistence type="evidence at protein level"/>
<evidence type="ECO:0000305" key="1"/>
<name>RELX_LEUER</name>
<feature type="peptide" id="PRO_0000016123" description="Relaxin B chain">
    <location>
        <begin position="1"/>
        <end position="40"/>
    </location>
</feature>
<feature type="peptide" id="PRO_0000016124" description="Relaxin A chain">
    <location>
        <begin position="41"/>
        <end position="64"/>
    </location>
</feature>
<feature type="disulfide bond" description="Interchain (between B and A chains)">
    <location>
        <begin position="11"/>
        <end position="51"/>
    </location>
</feature>
<feature type="disulfide bond" description="Interchain (between B and A chains)">
    <location>
        <begin position="23"/>
        <end position="64"/>
    </location>
</feature>
<feature type="disulfide bond">
    <location>
        <begin position="50"/>
        <end position="55"/>
    </location>
</feature>
<feature type="non-consecutive residues" evidence="1">
    <location>
        <begin position="40"/>
        <end position="41"/>
    </location>
</feature>
<dbReference type="PIR" id="A29543">
    <property type="entry name" value="A29543"/>
</dbReference>
<dbReference type="GO" id="GO:0005576">
    <property type="term" value="C:extracellular region"/>
    <property type="evidence" value="ECO:0007669"/>
    <property type="project" value="UniProtKB-SubCell"/>
</dbReference>
<dbReference type="GO" id="GO:0005179">
    <property type="term" value="F:hormone activity"/>
    <property type="evidence" value="ECO:0007669"/>
    <property type="project" value="UniProtKB-KW"/>
</dbReference>
<dbReference type="CDD" id="cd04365">
    <property type="entry name" value="IlGF_relaxin_like"/>
    <property type="match status" value="1"/>
</dbReference>
<dbReference type="Gene3D" id="1.10.100.10">
    <property type="entry name" value="Insulin-like"/>
    <property type="match status" value="1"/>
</dbReference>
<dbReference type="InterPro" id="IPR016179">
    <property type="entry name" value="Insulin-like"/>
</dbReference>
<dbReference type="InterPro" id="IPR036438">
    <property type="entry name" value="Insulin-like_sf"/>
</dbReference>
<dbReference type="InterPro" id="IPR022353">
    <property type="entry name" value="Insulin_CS"/>
</dbReference>
<dbReference type="InterPro" id="IPR022352">
    <property type="entry name" value="Insulin_family"/>
</dbReference>
<dbReference type="PRINTS" id="PR00276">
    <property type="entry name" value="INSULINFAMLY"/>
</dbReference>
<dbReference type="SMART" id="SM00078">
    <property type="entry name" value="IlGF"/>
    <property type="match status" value="1"/>
</dbReference>
<dbReference type="SUPFAM" id="SSF56994">
    <property type="entry name" value="Insulin-like"/>
    <property type="match status" value="1"/>
</dbReference>
<dbReference type="PROSITE" id="PS00262">
    <property type="entry name" value="INSULIN"/>
    <property type="match status" value="1"/>
</dbReference>
<organism>
    <name type="scientific">Leucoraja erinaceus</name>
    <name type="common">Little skate</name>
    <name type="synonym">Raja erinacea</name>
    <dbReference type="NCBI Taxonomy" id="7782"/>
    <lineage>
        <taxon>Eukaryota</taxon>
        <taxon>Metazoa</taxon>
        <taxon>Chordata</taxon>
        <taxon>Craniata</taxon>
        <taxon>Vertebrata</taxon>
        <taxon>Chondrichthyes</taxon>
        <taxon>Elasmobranchii</taxon>
        <taxon>Batoidea</taxon>
        <taxon>Rajiformes</taxon>
        <taxon>Rajidae</taxon>
        <taxon>Leucoraja</taxon>
    </lineage>
</organism>
<sequence length="64" mass="7499">RPNWEERSRLCGRDLIRAFIYLCGGTRWTRLPNFGNYPIMEEKMGFAKKCCAIGCSTEDFRMVC</sequence>
<protein>
    <recommendedName>
        <fullName>Relaxin</fullName>
    </recommendedName>
    <component>
        <recommendedName>
            <fullName>Relaxin B chain</fullName>
        </recommendedName>
    </component>
    <component>
        <recommendedName>
            <fullName>Relaxin A chain</fullName>
        </recommendedName>
    </component>
</protein>
<reference key="1">
    <citation type="journal article" date="1987" name="Biochem. Biophys. Res. Commun.">
        <title>Relaxin from an oviparous species, the skate (Raja erinacea).</title>
        <authorList>
            <person name="Bullesbach E.E."/>
            <person name="Schwabe C."/>
            <person name="Callard I.P."/>
        </authorList>
    </citation>
    <scope>PROTEIN SEQUENCE</scope>
    <source>
        <tissue>Ovary</tissue>
    </source>
</reference>
<comment type="subunit">
    <text>Heterodimer of a B chain and an A chain linked by two disulfide bonds.</text>
</comment>
<comment type="subcellular location">
    <subcellularLocation>
        <location>Secreted</location>
    </subcellularLocation>
</comment>
<comment type="similarity">
    <text evidence="1">Belongs to the insulin family.</text>
</comment>